<sequence>MPVRRLDPVLIDRIAAGEVIERPASALKELIENALDAGARRIDVAIEAGGRKLIRVVDDGCGMAPEDLDLAVERHATSKLPEGDLSSIETLGFRGEALPSIGSVAALEIFSRAMGSAVGARVKVDCGVKEGPAPAAQPQGTRVEIRDLFAGTPARLKFLRTDRAEARASAEIVERLAMAHPQVRFGFASSDVRGFDLAACADSPEGRLTRFSAVLGKDFRDNALFVEAEREGVRLQGFAGLPTWHRASAAAQHVFVNGRPVRDRLLLGAARAAYMDFLPSGRHAALVLFLTCDPREVDVNVHPAKAEVRFRDPGLTRGLIVGALKQTLADAQHRASPVNGASALDVLARRGPGFSGAGGPANWDWRRSPANPGFDAAALAGFAEAPAAAFAAVESLAADTRANAAAPSLEDLEAPLGAARAQIHETYIVSQTRDGIVIVDQHAAHERLVYERLKAARAGSKAPRQALLIPAIVELARAEVEAILDAAVLLAEFGLIIEPFGPGAVAVTETPALLQDPDPTRLARDLAAALVEDDGAAALERRFNLVLATMACHNSVRAGRRMRPEEMNALLRDMERTPGSGQCNHGRPTYVELKLADVEKLFGRR</sequence>
<protein>
    <recommendedName>
        <fullName evidence="1">DNA mismatch repair protein MutL</fullName>
    </recommendedName>
</protein>
<gene>
    <name evidence="1" type="primary">mutL</name>
    <name type="ordered locus">Msil_2869</name>
</gene>
<accession>B8ETE4</accession>
<evidence type="ECO:0000255" key="1">
    <source>
        <dbReference type="HAMAP-Rule" id="MF_00149"/>
    </source>
</evidence>
<name>MUTL_METSB</name>
<comment type="function">
    <text evidence="1">This protein is involved in the repair of mismatches in DNA. It is required for dam-dependent methyl-directed DNA mismatch repair. May act as a 'molecular matchmaker', a protein that promotes the formation of a stable complex between two or more DNA-binding proteins in an ATP-dependent manner without itself being part of a final effector complex.</text>
</comment>
<comment type="similarity">
    <text evidence="1">Belongs to the DNA mismatch repair MutL/HexB family.</text>
</comment>
<proteinExistence type="inferred from homology"/>
<organism>
    <name type="scientific">Methylocella silvestris (strain DSM 15510 / CIP 108128 / LMG 27833 / NCIMB 13906 / BL2)</name>
    <dbReference type="NCBI Taxonomy" id="395965"/>
    <lineage>
        <taxon>Bacteria</taxon>
        <taxon>Pseudomonadati</taxon>
        <taxon>Pseudomonadota</taxon>
        <taxon>Alphaproteobacteria</taxon>
        <taxon>Hyphomicrobiales</taxon>
        <taxon>Beijerinckiaceae</taxon>
        <taxon>Methylocella</taxon>
    </lineage>
</organism>
<dbReference type="EMBL" id="CP001280">
    <property type="protein sequence ID" value="ACK51786.1"/>
    <property type="molecule type" value="Genomic_DNA"/>
</dbReference>
<dbReference type="RefSeq" id="WP_012591855.1">
    <property type="nucleotide sequence ID" value="NC_011666.1"/>
</dbReference>
<dbReference type="SMR" id="B8ETE4"/>
<dbReference type="STRING" id="395965.Msil_2869"/>
<dbReference type="KEGG" id="msl:Msil_2869"/>
<dbReference type="eggNOG" id="COG0323">
    <property type="taxonomic scope" value="Bacteria"/>
</dbReference>
<dbReference type="HOGENOM" id="CLU_004131_4_2_5"/>
<dbReference type="OrthoDB" id="9763467at2"/>
<dbReference type="Proteomes" id="UP000002257">
    <property type="component" value="Chromosome"/>
</dbReference>
<dbReference type="GO" id="GO:0032300">
    <property type="term" value="C:mismatch repair complex"/>
    <property type="evidence" value="ECO:0007669"/>
    <property type="project" value="InterPro"/>
</dbReference>
<dbReference type="GO" id="GO:0005524">
    <property type="term" value="F:ATP binding"/>
    <property type="evidence" value="ECO:0007669"/>
    <property type="project" value="InterPro"/>
</dbReference>
<dbReference type="GO" id="GO:0016887">
    <property type="term" value="F:ATP hydrolysis activity"/>
    <property type="evidence" value="ECO:0007669"/>
    <property type="project" value="InterPro"/>
</dbReference>
<dbReference type="GO" id="GO:0140664">
    <property type="term" value="F:ATP-dependent DNA damage sensor activity"/>
    <property type="evidence" value="ECO:0007669"/>
    <property type="project" value="InterPro"/>
</dbReference>
<dbReference type="GO" id="GO:0030983">
    <property type="term" value="F:mismatched DNA binding"/>
    <property type="evidence" value="ECO:0007669"/>
    <property type="project" value="InterPro"/>
</dbReference>
<dbReference type="GO" id="GO:0006298">
    <property type="term" value="P:mismatch repair"/>
    <property type="evidence" value="ECO:0007669"/>
    <property type="project" value="UniProtKB-UniRule"/>
</dbReference>
<dbReference type="CDD" id="cd16926">
    <property type="entry name" value="HATPase_MutL-MLH-PMS-like"/>
    <property type="match status" value="1"/>
</dbReference>
<dbReference type="FunFam" id="3.30.565.10:FF:000003">
    <property type="entry name" value="DNA mismatch repair endonuclease MutL"/>
    <property type="match status" value="1"/>
</dbReference>
<dbReference type="Gene3D" id="3.30.230.10">
    <property type="match status" value="1"/>
</dbReference>
<dbReference type="Gene3D" id="3.30.565.10">
    <property type="entry name" value="Histidine kinase-like ATPase, C-terminal domain"/>
    <property type="match status" value="1"/>
</dbReference>
<dbReference type="Gene3D" id="3.30.1540.20">
    <property type="entry name" value="MutL, C-terminal domain, dimerisation subdomain"/>
    <property type="match status" value="1"/>
</dbReference>
<dbReference type="Gene3D" id="3.30.1370.100">
    <property type="entry name" value="MutL, C-terminal domain, regulatory subdomain"/>
    <property type="match status" value="1"/>
</dbReference>
<dbReference type="HAMAP" id="MF_00149">
    <property type="entry name" value="DNA_mis_repair"/>
    <property type="match status" value="1"/>
</dbReference>
<dbReference type="InterPro" id="IPR014762">
    <property type="entry name" value="DNA_mismatch_repair_CS"/>
</dbReference>
<dbReference type="InterPro" id="IPR020667">
    <property type="entry name" value="DNA_mismatch_repair_MutL"/>
</dbReference>
<dbReference type="InterPro" id="IPR013507">
    <property type="entry name" value="DNA_mismatch_S5_2-like"/>
</dbReference>
<dbReference type="InterPro" id="IPR036890">
    <property type="entry name" value="HATPase_C_sf"/>
</dbReference>
<dbReference type="InterPro" id="IPR002099">
    <property type="entry name" value="MutL/Mlh/PMS"/>
</dbReference>
<dbReference type="InterPro" id="IPR038973">
    <property type="entry name" value="MutL/Mlh/Pms-like"/>
</dbReference>
<dbReference type="InterPro" id="IPR014790">
    <property type="entry name" value="MutL_C"/>
</dbReference>
<dbReference type="InterPro" id="IPR042120">
    <property type="entry name" value="MutL_C_dimsub"/>
</dbReference>
<dbReference type="InterPro" id="IPR042121">
    <property type="entry name" value="MutL_C_regsub"/>
</dbReference>
<dbReference type="InterPro" id="IPR037198">
    <property type="entry name" value="MutL_C_sf"/>
</dbReference>
<dbReference type="InterPro" id="IPR020568">
    <property type="entry name" value="Ribosomal_Su5_D2-typ_SF"/>
</dbReference>
<dbReference type="InterPro" id="IPR014721">
    <property type="entry name" value="Ribsml_uS5_D2-typ_fold_subgr"/>
</dbReference>
<dbReference type="NCBIfam" id="TIGR00585">
    <property type="entry name" value="mutl"/>
    <property type="match status" value="1"/>
</dbReference>
<dbReference type="NCBIfam" id="NF000953">
    <property type="entry name" value="PRK00095.2-4"/>
    <property type="match status" value="1"/>
</dbReference>
<dbReference type="PANTHER" id="PTHR10073">
    <property type="entry name" value="DNA MISMATCH REPAIR PROTEIN MLH, PMS, MUTL"/>
    <property type="match status" value="1"/>
</dbReference>
<dbReference type="PANTHER" id="PTHR10073:SF12">
    <property type="entry name" value="DNA MISMATCH REPAIR PROTEIN MLH1"/>
    <property type="match status" value="1"/>
</dbReference>
<dbReference type="Pfam" id="PF01119">
    <property type="entry name" value="DNA_mis_repair"/>
    <property type="match status" value="1"/>
</dbReference>
<dbReference type="Pfam" id="PF13589">
    <property type="entry name" value="HATPase_c_3"/>
    <property type="match status" value="1"/>
</dbReference>
<dbReference type="Pfam" id="PF08676">
    <property type="entry name" value="MutL_C"/>
    <property type="match status" value="1"/>
</dbReference>
<dbReference type="SMART" id="SM01340">
    <property type="entry name" value="DNA_mis_repair"/>
    <property type="match status" value="1"/>
</dbReference>
<dbReference type="SMART" id="SM00853">
    <property type="entry name" value="MutL_C"/>
    <property type="match status" value="1"/>
</dbReference>
<dbReference type="SUPFAM" id="SSF55874">
    <property type="entry name" value="ATPase domain of HSP90 chaperone/DNA topoisomerase II/histidine kinase"/>
    <property type="match status" value="1"/>
</dbReference>
<dbReference type="SUPFAM" id="SSF118116">
    <property type="entry name" value="DNA mismatch repair protein MutL"/>
    <property type="match status" value="1"/>
</dbReference>
<dbReference type="SUPFAM" id="SSF54211">
    <property type="entry name" value="Ribosomal protein S5 domain 2-like"/>
    <property type="match status" value="1"/>
</dbReference>
<dbReference type="PROSITE" id="PS00058">
    <property type="entry name" value="DNA_MISMATCH_REPAIR_1"/>
    <property type="match status" value="1"/>
</dbReference>
<feature type="chain" id="PRO_1000123212" description="DNA mismatch repair protein MutL">
    <location>
        <begin position="1"/>
        <end position="605"/>
    </location>
</feature>
<reference key="1">
    <citation type="journal article" date="2010" name="J. Bacteriol.">
        <title>Complete genome sequence of the aerobic facultative methanotroph Methylocella silvestris BL2.</title>
        <authorList>
            <person name="Chen Y."/>
            <person name="Crombie A."/>
            <person name="Rahman M.T."/>
            <person name="Dedysh S.N."/>
            <person name="Liesack W."/>
            <person name="Stott M.B."/>
            <person name="Alam M."/>
            <person name="Theisen A.R."/>
            <person name="Murrell J.C."/>
            <person name="Dunfield P.F."/>
        </authorList>
    </citation>
    <scope>NUCLEOTIDE SEQUENCE [LARGE SCALE GENOMIC DNA]</scope>
    <source>
        <strain>DSM 15510 / CIP 108128 / LMG 27833 / NCIMB 13906 / BL2</strain>
    </source>
</reference>
<keyword id="KW-0227">DNA damage</keyword>
<keyword id="KW-0234">DNA repair</keyword>
<keyword id="KW-1185">Reference proteome</keyword>